<protein>
    <recommendedName>
        <fullName evidence="1">Large ribosomal subunit protein bL35</fullName>
    </recommendedName>
    <alternativeName>
        <fullName evidence="3">50S ribosomal protein L35</fullName>
    </alternativeName>
</protein>
<dbReference type="EMBL" id="BA000043">
    <property type="protein sequence ID" value="BAD77002.1"/>
    <property type="molecule type" value="Genomic_DNA"/>
</dbReference>
<dbReference type="RefSeq" id="WP_011232191.1">
    <property type="nucleotide sequence ID" value="NC_006510.1"/>
</dbReference>
<dbReference type="SMR" id="Q5KWD4"/>
<dbReference type="STRING" id="235909.GK2717"/>
<dbReference type="GeneID" id="89612078"/>
<dbReference type="KEGG" id="gka:GK2717"/>
<dbReference type="eggNOG" id="COG0291">
    <property type="taxonomic scope" value="Bacteria"/>
</dbReference>
<dbReference type="HOGENOM" id="CLU_169643_3_0_9"/>
<dbReference type="Proteomes" id="UP000001172">
    <property type="component" value="Chromosome"/>
</dbReference>
<dbReference type="GO" id="GO:0022625">
    <property type="term" value="C:cytosolic large ribosomal subunit"/>
    <property type="evidence" value="ECO:0007669"/>
    <property type="project" value="TreeGrafter"/>
</dbReference>
<dbReference type="GO" id="GO:0003735">
    <property type="term" value="F:structural constituent of ribosome"/>
    <property type="evidence" value="ECO:0007669"/>
    <property type="project" value="InterPro"/>
</dbReference>
<dbReference type="GO" id="GO:0006412">
    <property type="term" value="P:translation"/>
    <property type="evidence" value="ECO:0007669"/>
    <property type="project" value="UniProtKB-UniRule"/>
</dbReference>
<dbReference type="FunFam" id="4.10.410.60:FF:000001">
    <property type="entry name" value="50S ribosomal protein L35"/>
    <property type="match status" value="1"/>
</dbReference>
<dbReference type="Gene3D" id="4.10.410.60">
    <property type="match status" value="1"/>
</dbReference>
<dbReference type="HAMAP" id="MF_00514">
    <property type="entry name" value="Ribosomal_bL35"/>
    <property type="match status" value="1"/>
</dbReference>
<dbReference type="InterPro" id="IPR001706">
    <property type="entry name" value="Ribosomal_bL35"/>
</dbReference>
<dbReference type="InterPro" id="IPR021137">
    <property type="entry name" value="Ribosomal_bL35-like"/>
</dbReference>
<dbReference type="InterPro" id="IPR018265">
    <property type="entry name" value="Ribosomal_bL35_CS"/>
</dbReference>
<dbReference type="InterPro" id="IPR037229">
    <property type="entry name" value="Ribosomal_bL35_sf"/>
</dbReference>
<dbReference type="NCBIfam" id="TIGR00001">
    <property type="entry name" value="rpmI_bact"/>
    <property type="match status" value="1"/>
</dbReference>
<dbReference type="PANTHER" id="PTHR33343">
    <property type="entry name" value="54S RIBOSOMAL PROTEIN BL35M"/>
    <property type="match status" value="1"/>
</dbReference>
<dbReference type="PANTHER" id="PTHR33343:SF1">
    <property type="entry name" value="LARGE RIBOSOMAL SUBUNIT PROTEIN BL35M"/>
    <property type="match status" value="1"/>
</dbReference>
<dbReference type="Pfam" id="PF01632">
    <property type="entry name" value="Ribosomal_L35p"/>
    <property type="match status" value="1"/>
</dbReference>
<dbReference type="PRINTS" id="PR00064">
    <property type="entry name" value="RIBOSOMALL35"/>
</dbReference>
<dbReference type="SUPFAM" id="SSF143034">
    <property type="entry name" value="L35p-like"/>
    <property type="match status" value="1"/>
</dbReference>
<dbReference type="PROSITE" id="PS00936">
    <property type="entry name" value="RIBOSOMAL_L35"/>
    <property type="match status" value="1"/>
</dbReference>
<reference key="1">
    <citation type="journal article" date="2004" name="Nucleic Acids Res.">
        <title>Thermoadaptation trait revealed by the genome sequence of thermophilic Geobacillus kaustophilus.</title>
        <authorList>
            <person name="Takami H."/>
            <person name="Takaki Y."/>
            <person name="Chee G.-J."/>
            <person name="Nishi S."/>
            <person name="Shimamura S."/>
            <person name="Suzuki H."/>
            <person name="Matsui S."/>
            <person name="Uchiyama I."/>
        </authorList>
    </citation>
    <scope>NUCLEOTIDE SEQUENCE [LARGE SCALE GENOMIC DNA]</scope>
    <source>
        <strain>HTA426</strain>
    </source>
</reference>
<proteinExistence type="inferred from homology"/>
<accession>Q5KWD4</accession>
<keyword id="KW-1185">Reference proteome</keyword>
<keyword id="KW-0687">Ribonucleoprotein</keyword>
<keyword id="KW-0689">Ribosomal protein</keyword>
<organism>
    <name type="scientific">Geobacillus kaustophilus (strain HTA426)</name>
    <dbReference type="NCBI Taxonomy" id="235909"/>
    <lineage>
        <taxon>Bacteria</taxon>
        <taxon>Bacillati</taxon>
        <taxon>Bacillota</taxon>
        <taxon>Bacilli</taxon>
        <taxon>Bacillales</taxon>
        <taxon>Anoxybacillaceae</taxon>
        <taxon>Geobacillus</taxon>
        <taxon>Geobacillus thermoleovorans group</taxon>
    </lineage>
</organism>
<name>RL35_GEOKA</name>
<evidence type="ECO:0000255" key="1">
    <source>
        <dbReference type="HAMAP-Rule" id="MF_00514"/>
    </source>
</evidence>
<evidence type="ECO:0000256" key="2">
    <source>
        <dbReference type="SAM" id="MobiDB-lite"/>
    </source>
</evidence>
<evidence type="ECO:0000305" key="3"/>
<gene>
    <name evidence="1" type="primary">rpmI</name>
    <name type="ordered locus">GK2717</name>
</gene>
<sequence>MPKMKTHRGSAKRFKKTASGKLKRGHAYTSHLFANKTKKQKRHLRKATLVSPGDFKRIRQMLDNLK</sequence>
<comment type="similarity">
    <text evidence="1">Belongs to the bacterial ribosomal protein bL35 family.</text>
</comment>
<feature type="chain" id="PRO_0000258683" description="Large ribosomal subunit protein bL35">
    <location>
        <begin position="1"/>
        <end position="66"/>
    </location>
</feature>
<feature type="region of interest" description="Disordered" evidence="2">
    <location>
        <begin position="1"/>
        <end position="29"/>
    </location>
</feature>
<feature type="compositionally biased region" description="Basic residues" evidence="2">
    <location>
        <begin position="1"/>
        <end position="26"/>
    </location>
</feature>